<name>SMC_METJA</name>
<evidence type="ECO:0000255" key="1">
    <source>
        <dbReference type="HAMAP-Rule" id="MF_01894"/>
    </source>
</evidence>
<feature type="chain" id="PRO_0000119031" description="Chromosome partition protein Smc">
    <location>
        <begin position="1"/>
        <end position="1169"/>
    </location>
</feature>
<feature type="domain" description="SMC hinge">
    <location>
        <begin position="523"/>
        <end position="636"/>
    </location>
</feature>
<feature type="coiled-coil region" evidence="1">
    <location>
        <begin position="166"/>
        <end position="507"/>
    </location>
</feature>
<feature type="coiled-coil region" evidence="1">
    <location>
        <begin position="676"/>
        <end position="1030"/>
    </location>
</feature>
<feature type="binding site" evidence="1">
    <location>
        <begin position="32"/>
        <end position="39"/>
    </location>
    <ligand>
        <name>ATP</name>
        <dbReference type="ChEBI" id="CHEBI:30616"/>
    </ligand>
</feature>
<keyword id="KW-0067">ATP-binding</keyword>
<keyword id="KW-0175">Coiled coil</keyword>
<keyword id="KW-0963">Cytoplasm</keyword>
<keyword id="KW-0238">DNA-binding</keyword>
<keyword id="KW-0547">Nucleotide-binding</keyword>
<keyword id="KW-1185">Reference proteome</keyword>
<organism>
    <name type="scientific">Methanocaldococcus jannaschii (strain ATCC 43067 / DSM 2661 / JAL-1 / JCM 10045 / NBRC 100440)</name>
    <name type="common">Methanococcus jannaschii</name>
    <dbReference type="NCBI Taxonomy" id="243232"/>
    <lineage>
        <taxon>Archaea</taxon>
        <taxon>Methanobacteriati</taxon>
        <taxon>Methanobacteriota</taxon>
        <taxon>Methanomada group</taxon>
        <taxon>Methanococci</taxon>
        <taxon>Methanococcales</taxon>
        <taxon>Methanocaldococcaceae</taxon>
        <taxon>Methanocaldococcus</taxon>
    </lineage>
</organism>
<reference key="1">
    <citation type="journal article" date="1996" name="Science">
        <title>Complete genome sequence of the methanogenic archaeon, Methanococcus jannaschii.</title>
        <authorList>
            <person name="Bult C.J."/>
            <person name="White O."/>
            <person name="Olsen G.J."/>
            <person name="Zhou L."/>
            <person name="Fleischmann R.D."/>
            <person name="Sutton G.G."/>
            <person name="Blake J.A."/>
            <person name="FitzGerald L.M."/>
            <person name="Clayton R.A."/>
            <person name="Gocayne J.D."/>
            <person name="Kerlavage A.R."/>
            <person name="Dougherty B.A."/>
            <person name="Tomb J.-F."/>
            <person name="Adams M.D."/>
            <person name="Reich C.I."/>
            <person name="Overbeek R."/>
            <person name="Kirkness E.F."/>
            <person name="Weinstock K.G."/>
            <person name="Merrick J.M."/>
            <person name="Glodek A."/>
            <person name="Scott J.L."/>
            <person name="Geoghagen N.S.M."/>
            <person name="Weidman J.F."/>
            <person name="Fuhrmann J.L."/>
            <person name="Nguyen D."/>
            <person name="Utterback T.R."/>
            <person name="Kelley J.M."/>
            <person name="Peterson J.D."/>
            <person name="Sadow P.W."/>
            <person name="Hanna M.C."/>
            <person name="Cotton M.D."/>
            <person name="Roberts K.M."/>
            <person name="Hurst M.A."/>
            <person name="Kaine B.P."/>
            <person name="Borodovsky M."/>
            <person name="Klenk H.-P."/>
            <person name="Fraser C.M."/>
            <person name="Smith H.O."/>
            <person name="Woese C.R."/>
            <person name="Venter J.C."/>
        </authorList>
    </citation>
    <scope>NUCLEOTIDE SEQUENCE [LARGE SCALE GENOMIC DNA]</scope>
    <source>
        <strain>ATCC 43067 / DSM 2661 / JAL-1 / JCM 10045 / NBRC 100440</strain>
    </source>
</reference>
<reference key="2">
    <citation type="submission" date="1998-02" db="EMBL/GenBank/DDBJ databases">
        <authorList>
            <person name="Bult C.J."/>
            <person name="White O."/>
            <person name="Olsen G.J."/>
            <person name="Zhou L."/>
            <person name="Fleischmann R.D."/>
            <person name="Sutton G.G."/>
            <person name="Blake J.A."/>
            <person name="FitzGerald L.M."/>
            <person name="Clayton R.A."/>
            <person name="Gocayne J.D."/>
            <person name="Kerlavage A.R."/>
            <person name="Dougherty B.A."/>
            <person name="Tomb J.-F."/>
            <person name="Adams M.D."/>
            <person name="Reich C.I."/>
            <person name="Overbeek R."/>
            <person name="Kirkness E.F."/>
            <person name="Weinstock K.G."/>
            <person name="Merrick J.M."/>
            <person name="Glodek A."/>
            <person name="Scott J.L."/>
            <person name="Geoghagen N.S.M."/>
            <person name="Weidman J.F."/>
            <person name="Fuhrmann J.L."/>
            <person name="Nguyen D."/>
            <person name="Utterback T.R."/>
            <person name="Kelley J.M."/>
            <person name="Peterson J.D."/>
            <person name="Sadow P.W."/>
            <person name="Hanna M.C."/>
            <person name="Cotton M.D."/>
            <person name="Roberts K.M."/>
            <person name="Hurst M.A."/>
            <person name="Kaine B.P."/>
            <person name="Borodovsky M."/>
            <person name="Klenk H.-P."/>
            <person name="Fraser C.M."/>
            <person name="Smith H.O."/>
            <person name="Woese C.R."/>
            <person name="Venter J.C."/>
        </authorList>
    </citation>
    <scope>SEQUENCE REVISION</scope>
</reference>
<protein>
    <recommendedName>
        <fullName evidence="1">Chromosome partition protein Smc</fullName>
    </recommendedName>
</protein>
<comment type="function">
    <text evidence="1">Required for chromosome condensation and partitioning.</text>
</comment>
<comment type="subunit">
    <text evidence="1">Homodimer.</text>
</comment>
<comment type="subcellular location">
    <subcellularLocation>
        <location evidence="1">Cytoplasm</location>
    </subcellularLocation>
</comment>
<comment type="domain">
    <text evidence="1">Contains large globular domains required for ATP hydrolysis at each terminus and a third globular domain forming a flexible SMC hinge near the middle of the molecule. These domains are separated by coiled-coil structures.</text>
</comment>
<comment type="similarity">
    <text evidence="1">Belongs to the SMC family.</text>
</comment>
<sequence length="1169" mass="136635">MVTLEKIELKNFKSFKKLSLDIPKGFTAIVGPNGSGKSNIVDAILFVLGKTSAKKLRANRFSGLITYHNGKRADFAEVCLYFTNENNAFNVNADKVGILRRIKSSGETDYYLVWKENDKEKRKKMTKHEIIDLFRRLGLLGDNVISQGDLLKIINISPIERRKIIDEISGIAEFDEKKKKAEEELKKARELIEMIDIRISEVENNLKKLKKEKEDAEKYIKLNEELKAAKYALILKKVSYLNVLLENIQNDIKNLEELKNEFLSKVREIDVEIENLKLRLNNIINELNEKGNEEVLELHKSIKELEVEIENDKKVLDSSINELKKVEVEIENKKKEIKETQKKIIENRDSIIEKEQQIKEIEEKIKNLNYEKERLKEAIAESESIIKHLKESEMEIADEIAKNQNELYRLKKELNDLDNLINRKNFEIEKNNEMIKKLKEELETVEDVDTKPLYLELENLNVEIEFSKRGIKELEEKKKELQAKLDELHAEYVKENARIKALKEMEELSMDRAIREILNANLPGIIDIVGNLGKTKIEYKTAIEVAAGNRLNHIVVKRMDDAVRAIKYLKERKLGRATFLPLDRIEGREAYYIDEDGVIGRAIDLVEFDEKYRRVFEYVFGNTVVVENIDIAKELAKKYRKVRFVTLDGDVIEPSGAMIGGTFKSKAKIKVDVDLSKLNKIADEIIAIESELRKIKEEIERLSKIVKRSSAKKMEIENTLEIIKKNEMRKREIAEKNTIKIKELELKNKDILEELEELNLKREEILNRINEIESKINELIERREKIINELKEYESDENLKRMNEIEGELKILEKEKAKLKNEIDKGLTLVKEILIPKIEELNKKVSELINKKVILEKNISFYKESIEKNLSILEEKRKRYEELAKNLKELTEKKEQLEKEIETLERERREILRKVRDIENRINELMVEKAKYESKLEEEERKLYLCEKVDVSKELEKKDIEELEIYIGELENEIKSLEPVNMRAIEDYNYVAERYKELIEKRKEYERDEKKYLQLMEELENKKKEVFMEVFNKVAKNFEEVYKEIGGIGKLSLENEKNPFEGGILIDASPRGKKLLSLDAMSGGEKSLTALAFLFAIQRLNPSPFYVLDEVDAALDVKNVSLIADMIKNASKDSQFIVISHREQMVSKADVVYGVYMENGLSKVVGIRL</sequence>
<gene>
    <name evidence="1" type="primary">smc</name>
    <name type="ordered locus">MJ1643</name>
</gene>
<accession>Q59037</accession>
<dbReference type="EMBL" id="L77117">
    <property type="protein sequence ID" value="AAB99663.1"/>
    <property type="molecule type" value="Genomic_DNA"/>
</dbReference>
<dbReference type="PIR" id="A64505">
    <property type="entry name" value="A64505"/>
</dbReference>
<dbReference type="RefSeq" id="WP_010871167.1">
    <property type="nucleotide sequence ID" value="NC_000909.1"/>
</dbReference>
<dbReference type="SMR" id="Q59037"/>
<dbReference type="FunCoup" id="Q59037">
    <property type="interactions" value="143"/>
</dbReference>
<dbReference type="STRING" id="243232.MJ_1643"/>
<dbReference type="PaxDb" id="243232-MJ_1643"/>
<dbReference type="EnsemblBacteria" id="AAB99663">
    <property type="protein sequence ID" value="AAB99663"/>
    <property type="gene ID" value="MJ_1643"/>
</dbReference>
<dbReference type="GeneID" id="1452552"/>
<dbReference type="KEGG" id="mja:MJ_1643"/>
<dbReference type="eggNOG" id="arCOG00371">
    <property type="taxonomic scope" value="Archaea"/>
</dbReference>
<dbReference type="HOGENOM" id="CLU_001042_2_2_2"/>
<dbReference type="InParanoid" id="Q59037"/>
<dbReference type="OrthoDB" id="9143at2157"/>
<dbReference type="PhylomeDB" id="Q59037"/>
<dbReference type="Proteomes" id="UP000000805">
    <property type="component" value="Chromosome"/>
</dbReference>
<dbReference type="GO" id="GO:0005694">
    <property type="term" value="C:chromosome"/>
    <property type="evidence" value="ECO:0007669"/>
    <property type="project" value="InterPro"/>
</dbReference>
<dbReference type="GO" id="GO:0005737">
    <property type="term" value="C:cytoplasm"/>
    <property type="evidence" value="ECO:0007669"/>
    <property type="project" value="UniProtKB-SubCell"/>
</dbReference>
<dbReference type="GO" id="GO:0005524">
    <property type="term" value="F:ATP binding"/>
    <property type="evidence" value="ECO:0007669"/>
    <property type="project" value="UniProtKB-UniRule"/>
</dbReference>
<dbReference type="GO" id="GO:0016887">
    <property type="term" value="F:ATP hydrolysis activity"/>
    <property type="evidence" value="ECO:0007669"/>
    <property type="project" value="InterPro"/>
</dbReference>
<dbReference type="GO" id="GO:0003677">
    <property type="term" value="F:DNA binding"/>
    <property type="evidence" value="ECO:0007669"/>
    <property type="project" value="UniProtKB-UniRule"/>
</dbReference>
<dbReference type="GO" id="GO:0030261">
    <property type="term" value="P:chromosome condensation"/>
    <property type="evidence" value="ECO:0007669"/>
    <property type="project" value="InterPro"/>
</dbReference>
<dbReference type="GO" id="GO:0007059">
    <property type="term" value="P:chromosome segregation"/>
    <property type="evidence" value="ECO:0007669"/>
    <property type="project" value="UniProtKB-UniRule"/>
</dbReference>
<dbReference type="GO" id="GO:0006260">
    <property type="term" value="P:DNA replication"/>
    <property type="evidence" value="ECO:0007669"/>
    <property type="project" value="UniProtKB-UniRule"/>
</dbReference>
<dbReference type="GO" id="GO:0007062">
    <property type="term" value="P:sister chromatid cohesion"/>
    <property type="evidence" value="ECO:0007669"/>
    <property type="project" value="InterPro"/>
</dbReference>
<dbReference type="Gene3D" id="1.20.1060.20">
    <property type="match status" value="1"/>
</dbReference>
<dbReference type="Gene3D" id="3.30.70.1620">
    <property type="match status" value="1"/>
</dbReference>
<dbReference type="Gene3D" id="3.40.50.300">
    <property type="entry name" value="P-loop containing nucleotide triphosphate hydrolases"/>
    <property type="match status" value="2"/>
</dbReference>
<dbReference type="HAMAP" id="MF_01894">
    <property type="entry name" value="Smc_prok"/>
    <property type="match status" value="1"/>
</dbReference>
<dbReference type="InterPro" id="IPR027417">
    <property type="entry name" value="P-loop_NTPase"/>
</dbReference>
<dbReference type="InterPro" id="IPR003395">
    <property type="entry name" value="RecF/RecN/SMC_N"/>
</dbReference>
<dbReference type="InterPro" id="IPR024704">
    <property type="entry name" value="SMC"/>
</dbReference>
<dbReference type="InterPro" id="IPR010935">
    <property type="entry name" value="SMC_hinge"/>
</dbReference>
<dbReference type="InterPro" id="IPR036277">
    <property type="entry name" value="SMC_hinge_sf"/>
</dbReference>
<dbReference type="InterPro" id="IPR011890">
    <property type="entry name" value="SMC_prok"/>
</dbReference>
<dbReference type="NCBIfam" id="TIGR02169">
    <property type="entry name" value="SMC_prok_A"/>
    <property type="match status" value="1"/>
</dbReference>
<dbReference type="NCBIfam" id="TIGR02168">
    <property type="entry name" value="SMC_prok_B"/>
    <property type="match status" value="1"/>
</dbReference>
<dbReference type="PANTHER" id="PTHR43977">
    <property type="entry name" value="STRUCTURAL MAINTENANCE OF CHROMOSOMES PROTEIN 3"/>
    <property type="match status" value="1"/>
</dbReference>
<dbReference type="Pfam" id="PF06470">
    <property type="entry name" value="SMC_hinge"/>
    <property type="match status" value="1"/>
</dbReference>
<dbReference type="Pfam" id="PF02463">
    <property type="entry name" value="SMC_N"/>
    <property type="match status" value="2"/>
</dbReference>
<dbReference type="PIRSF" id="PIRSF005719">
    <property type="entry name" value="SMC"/>
    <property type="match status" value="1"/>
</dbReference>
<dbReference type="SMART" id="SM00968">
    <property type="entry name" value="SMC_hinge"/>
    <property type="match status" value="1"/>
</dbReference>
<dbReference type="SUPFAM" id="SSF52540">
    <property type="entry name" value="P-loop containing nucleoside triphosphate hydrolases"/>
    <property type="match status" value="1"/>
</dbReference>
<dbReference type="SUPFAM" id="SSF75553">
    <property type="entry name" value="Smc hinge domain"/>
    <property type="match status" value="1"/>
</dbReference>
<proteinExistence type="inferred from homology"/>